<gene>
    <name evidence="1" type="primary">prfA</name>
    <name type="ordered locus">MLBr01134</name>
</gene>
<organism>
    <name type="scientific">Mycobacterium leprae (strain Br4923)</name>
    <dbReference type="NCBI Taxonomy" id="561304"/>
    <lineage>
        <taxon>Bacteria</taxon>
        <taxon>Bacillati</taxon>
        <taxon>Actinomycetota</taxon>
        <taxon>Actinomycetes</taxon>
        <taxon>Mycobacteriales</taxon>
        <taxon>Mycobacteriaceae</taxon>
        <taxon>Mycobacterium</taxon>
    </lineage>
</organism>
<name>RF1_MYCLB</name>
<sequence length="361" mass="39492">MAQPVQSIDVLLIEHAELELALADPELHSNPAEARKAGRRFARLAPIVATHRKLISARDDLQTARELAAGDESFADEIAELESRIAELTTQLTDMLAPHDPHGPDDIVLEVKSGEGGEESALFAADLARMYIRYAERHGWTVTVLDETTSDLGGYKDATLAISHKGASDGDAVDGVWSRMKFEGGVHRVQRVPVTESQGRVHTSAAGVLVYPEPEEIGEVHIDESDLRIDVYRSSGKGGQGVNTTDSAVRITHLPTGVVVTCQNERSQLQNKTRALQVLAARLQAMAEEQALANASADRASQIRTVDRSERIRTYNFPENRITDHRIGYKAHNLDQVLDGDLDALFDALSAADKQSRLQQV</sequence>
<comment type="function">
    <text evidence="1">Peptide chain release factor 1 directs the termination of translation in response to the peptide chain termination codons UAG and UAA.</text>
</comment>
<comment type="subcellular location">
    <subcellularLocation>
        <location evidence="1">Cytoplasm</location>
    </subcellularLocation>
</comment>
<comment type="PTM">
    <text evidence="1">Methylated by PrmC. Methylation increases the termination efficiency of RF1.</text>
</comment>
<comment type="similarity">
    <text evidence="1">Belongs to the prokaryotic/mitochondrial release factor family.</text>
</comment>
<feature type="chain" id="PRO_1000193499" description="Peptide chain release factor 1">
    <location>
        <begin position="1"/>
        <end position="361"/>
    </location>
</feature>
<feature type="modified residue" description="N5-methylglutamine" evidence="1">
    <location>
        <position position="240"/>
    </location>
</feature>
<reference key="1">
    <citation type="journal article" date="2009" name="Nat. Genet.">
        <title>Comparative genomic and phylogeographic analysis of Mycobacterium leprae.</title>
        <authorList>
            <person name="Monot M."/>
            <person name="Honore N."/>
            <person name="Garnier T."/>
            <person name="Zidane N."/>
            <person name="Sherafi D."/>
            <person name="Paniz-Mondolfi A."/>
            <person name="Matsuoka M."/>
            <person name="Taylor G.M."/>
            <person name="Donoghue H.D."/>
            <person name="Bouwman A."/>
            <person name="Mays S."/>
            <person name="Watson C."/>
            <person name="Lockwood D."/>
            <person name="Khamispour A."/>
            <person name="Dowlati Y."/>
            <person name="Jianping S."/>
            <person name="Rea T.H."/>
            <person name="Vera-Cabrera L."/>
            <person name="Stefani M.M."/>
            <person name="Banu S."/>
            <person name="Macdonald M."/>
            <person name="Sapkota B.R."/>
            <person name="Spencer J.S."/>
            <person name="Thomas J."/>
            <person name="Harshman K."/>
            <person name="Singh P."/>
            <person name="Busso P."/>
            <person name="Gattiker A."/>
            <person name="Rougemont J."/>
            <person name="Brennan P.J."/>
            <person name="Cole S.T."/>
        </authorList>
    </citation>
    <scope>NUCLEOTIDE SEQUENCE [LARGE SCALE GENOMIC DNA]</scope>
    <source>
        <strain>Br4923</strain>
    </source>
</reference>
<proteinExistence type="inferred from homology"/>
<protein>
    <recommendedName>
        <fullName evidence="1">Peptide chain release factor 1</fullName>
        <shortName evidence="1">RF-1</shortName>
    </recommendedName>
</protein>
<keyword id="KW-0963">Cytoplasm</keyword>
<keyword id="KW-0488">Methylation</keyword>
<keyword id="KW-0648">Protein biosynthesis</keyword>
<dbReference type="EMBL" id="FM211192">
    <property type="protein sequence ID" value="CAR71229.1"/>
    <property type="molecule type" value="Genomic_DNA"/>
</dbReference>
<dbReference type="SMR" id="B8ZR31"/>
<dbReference type="KEGG" id="mlb:MLBr01134"/>
<dbReference type="HOGENOM" id="CLU_036856_0_1_11"/>
<dbReference type="Proteomes" id="UP000006900">
    <property type="component" value="Chromosome"/>
</dbReference>
<dbReference type="GO" id="GO:0005737">
    <property type="term" value="C:cytoplasm"/>
    <property type="evidence" value="ECO:0007669"/>
    <property type="project" value="UniProtKB-SubCell"/>
</dbReference>
<dbReference type="GO" id="GO:0016149">
    <property type="term" value="F:translation release factor activity, codon specific"/>
    <property type="evidence" value="ECO:0007669"/>
    <property type="project" value="UniProtKB-UniRule"/>
</dbReference>
<dbReference type="FunFam" id="3.30.160.20:FF:000004">
    <property type="entry name" value="Peptide chain release factor 1"/>
    <property type="match status" value="1"/>
</dbReference>
<dbReference type="Gene3D" id="3.30.160.20">
    <property type="match status" value="1"/>
</dbReference>
<dbReference type="Gene3D" id="3.30.70.1660">
    <property type="match status" value="1"/>
</dbReference>
<dbReference type="Gene3D" id="6.10.140.1950">
    <property type="match status" value="1"/>
</dbReference>
<dbReference type="HAMAP" id="MF_00093">
    <property type="entry name" value="Rel_fac_1"/>
    <property type="match status" value="1"/>
</dbReference>
<dbReference type="InterPro" id="IPR005139">
    <property type="entry name" value="PCRF"/>
</dbReference>
<dbReference type="InterPro" id="IPR000352">
    <property type="entry name" value="Pep_chain_release_fac_I"/>
</dbReference>
<dbReference type="InterPro" id="IPR045853">
    <property type="entry name" value="Pep_chain_release_fac_I_sf"/>
</dbReference>
<dbReference type="InterPro" id="IPR050057">
    <property type="entry name" value="Prokaryotic/Mito_RF"/>
</dbReference>
<dbReference type="InterPro" id="IPR004373">
    <property type="entry name" value="RF-1"/>
</dbReference>
<dbReference type="NCBIfam" id="TIGR00019">
    <property type="entry name" value="prfA"/>
    <property type="match status" value="1"/>
</dbReference>
<dbReference type="NCBIfam" id="NF001859">
    <property type="entry name" value="PRK00591.1"/>
    <property type="match status" value="1"/>
</dbReference>
<dbReference type="PANTHER" id="PTHR43804">
    <property type="entry name" value="LD18447P"/>
    <property type="match status" value="1"/>
</dbReference>
<dbReference type="PANTHER" id="PTHR43804:SF7">
    <property type="entry name" value="LD18447P"/>
    <property type="match status" value="1"/>
</dbReference>
<dbReference type="Pfam" id="PF03462">
    <property type="entry name" value="PCRF"/>
    <property type="match status" value="1"/>
</dbReference>
<dbReference type="Pfam" id="PF00472">
    <property type="entry name" value="RF-1"/>
    <property type="match status" value="1"/>
</dbReference>
<dbReference type="SMART" id="SM00937">
    <property type="entry name" value="PCRF"/>
    <property type="match status" value="1"/>
</dbReference>
<dbReference type="SUPFAM" id="SSF75620">
    <property type="entry name" value="Release factor"/>
    <property type="match status" value="1"/>
</dbReference>
<dbReference type="PROSITE" id="PS00745">
    <property type="entry name" value="RF_PROK_I"/>
    <property type="match status" value="1"/>
</dbReference>
<evidence type="ECO:0000255" key="1">
    <source>
        <dbReference type="HAMAP-Rule" id="MF_00093"/>
    </source>
</evidence>
<accession>B8ZR31</accession>